<dbReference type="EMBL" id="CP000386">
    <property type="protein sequence ID" value="ABG05094.1"/>
    <property type="molecule type" value="Genomic_DNA"/>
</dbReference>
<dbReference type="RefSeq" id="WP_011565109.1">
    <property type="nucleotide sequence ID" value="NC_008148.1"/>
</dbReference>
<dbReference type="SMR" id="Q1AU34"/>
<dbReference type="STRING" id="266117.Rxyl_2150"/>
<dbReference type="KEGG" id="rxy:Rxyl_2150"/>
<dbReference type="eggNOG" id="COG0091">
    <property type="taxonomic scope" value="Bacteria"/>
</dbReference>
<dbReference type="HOGENOM" id="CLU_083987_3_3_11"/>
<dbReference type="OrthoDB" id="9805969at2"/>
<dbReference type="PhylomeDB" id="Q1AU34"/>
<dbReference type="Proteomes" id="UP000006637">
    <property type="component" value="Chromosome"/>
</dbReference>
<dbReference type="GO" id="GO:0022625">
    <property type="term" value="C:cytosolic large ribosomal subunit"/>
    <property type="evidence" value="ECO:0007669"/>
    <property type="project" value="TreeGrafter"/>
</dbReference>
<dbReference type="GO" id="GO:0019843">
    <property type="term" value="F:rRNA binding"/>
    <property type="evidence" value="ECO:0007669"/>
    <property type="project" value="UniProtKB-UniRule"/>
</dbReference>
<dbReference type="GO" id="GO:0003735">
    <property type="term" value="F:structural constituent of ribosome"/>
    <property type="evidence" value="ECO:0007669"/>
    <property type="project" value="InterPro"/>
</dbReference>
<dbReference type="GO" id="GO:0006412">
    <property type="term" value="P:translation"/>
    <property type="evidence" value="ECO:0007669"/>
    <property type="project" value="UniProtKB-UniRule"/>
</dbReference>
<dbReference type="CDD" id="cd00336">
    <property type="entry name" value="Ribosomal_L22"/>
    <property type="match status" value="1"/>
</dbReference>
<dbReference type="Gene3D" id="3.90.470.10">
    <property type="entry name" value="Ribosomal protein L22/L17"/>
    <property type="match status" value="1"/>
</dbReference>
<dbReference type="HAMAP" id="MF_01331_B">
    <property type="entry name" value="Ribosomal_uL22_B"/>
    <property type="match status" value="1"/>
</dbReference>
<dbReference type="InterPro" id="IPR001063">
    <property type="entry name" value="Ribosomal_uL22"/>
</dbReference>
<dbReference type="InterPro" id="IPR005727">
    <property type="entry name" value="Ribosomal_uL22_bac/chlpt-type"/>
</dbReference>
<dbReference type="InterPro" id="IPR047867">
    <property type="entry name" value="Ribosomal_uL22_bac/org-type"/>
</dbReference>
<dbReference type="InterPro" id="IPR018260">
    <property type="entry name" value="Ribosomal_uL22_CS"/>
</dbReference>
<dbReference type="InterPro" id="IPR036394">
    <property type="entry name" value="Ribosomal_uL22_sf"/>
</dbReference>
<dbReference type="NCBIfam" id="TIGR01044">
    <property type="entry name" value="rplV_bact"/>
    <property type="match status" value="1"/>
</dbReference>
<dbReference type="PANTHER" id="PTHR13501">
    <property type="entry name" value="CHLOROPLAST 50S RIBOSOMAL PROTEIN L22-RELATED"/>
    <property type="match status" value="1"/>
</dbReference>
<dbReference type="PANTHER" id="PTHR13501:SF8">
    <property type="entry name" value="LARGE RIBOSOMAL SUBUNIT PROTEIN UL22M"/>
    <property type="match status" value="1"/>
</dbReference>
<dbReference type="Pfam" id="PF00237">
    <property type="entry name" value="Ribosomal_L22"/>
    <property type="match status" value="1"/>
</dbReference>
<dbReference type="SUPFAM" id="SSF54843">
    <property type="entry name" value="Ribosomal protein L22"/>
    <property type="match status" value="1"/>
</dbReference>
<dbReference type="PROSITE" id="PS00464">
    <property type="entry name" value="RIBOSOMAL_L22"/>
    <property type="match status" value="1"/>
</dbReference>
<feature type="chain" id="PRO_0000354514" description="Large ribosomal subunit protein uL22">
    <location>
        <begin position="1"/>
        <end position="127"/>
    </location>
</feature>
<feature type="region of interest" description="Disordered" evidence="2">
    <location>
        <begin position="106"/>
        <end position="127"/>
    </location>
</feature>
<feature type="compositionally biased region" description="Low complexity" evidence="2">
    <location>
        <begin position="106"/>
        <end position="117"/>
    </location>
</feature>
<keyword id="KW-1185">Reference proteome</keyword>
<keyword id="KW-0687">Ribonucleoprotein</keyword>
<keyword id="KW-0689">Ribosomal protein</keyword>
<keyword id="KW-0694">RNA-binding</keyword>
<keyword id="KW-0699">rRNA-binding</keyword>
<name>RL22_RUBXD</name>
<evidence type="ECO:0000255" key="1">
    <source>
        <dbReference type="HAMAP-Rule" id="MF_01331"/>
    </source>
</evidence>
<evidence type="ECO:0000256" key="2">
    <source>
        <dbReference type="SAM" id="MobiDB-lite"/>
    </source>
</evidence>
<evidence type="ECO:0000305" key="3"/>
<protein>
    <recommendedName>
        <fullName evidence="1">Large ribosomal subunit protein uL22</fullName>
    </recommendedName>
    <alternativeName>
        <fullName evidence="3">50S ribosomal protein L22</fullName>
    </alternativeName>
</protein>
<organism>
    <name type="scientific">Rubrobacter xylanophilus (strain DSM 9941 / JCM 11954 / NBRC 16129 / PRD-1)</name>
    <dbReference type="NCBI Taxonomy" id="266117"/>
    <lineage>
        <taxon>Bacteria</taxon>
        <taxon>Bacillati</taxon>
        <taxon>Actinomycetota</taxon>
        <taxon>Rubrobacteria</taxon>
        <taxon>Rubrobacterales</taxon>
        <taxon>Rubrobacteraceae</taxon>
        <taxon>Rubrobacter</taxon>
    </lineage>
</organism>
<accession>Q1AU34</accession>
<gene>
    <name evidence="1" type="primary">rplV</name>
    <name type="ordered locus">Rxyl_2150</name>
</gene>
<sequence>MRAVAKYVRISPRKARLVADQIRGKSYPEAASILRFTNKRAARILGDVLKSAAANAENNHDADPELLFVEEVRVDEGPTIKRYRPRALGRATMIRKRTSHITLRLGAPEGVPVGGAVDTPGDEEEEE</sequence>
<proteinExistence type="inferred from homology"/>
<comment type="function">
    <text evidence="1">This protein binds specifically to 23S rRNA; its binding is stimulated by other ribosomal proteins, e.g. L4, L17, and L20. It is important during the early stages of 50S assembly. It makes multiple contacts with different domains of the 23S rRNA in the assembled 50S subunit and ribosome (By similarity).</text>
</comment>
<comment type="function">
    <text evidence="1">The globular domain of the protein is located near the polypeptide exit tunnel on the outside of the subunit, while an extended beta-hairpin is found that lines the wall of the exit tunnel in the center of the 70S ribosome.</text>
</comment>
<comment type="subunit">
    <text evidence="1">Part of the 50S ribosomal subunit.</text>
</comment>
<comment type="similarity">
    <text evidence="1">Belongs to the universal ribosomal protein uL22 family.</text>
</comment>
<reference key="1">
    <citation type="submission" date="2006-06" db="EMBL/GenBank/DDBJ databases">
        <title>Complete sequence of Rubrobacter xylanophilus DSM 9941.</title>
        <authorList>
            <consortium name="US DOE Joint Genome Institute"/>
            <person name="Copeland A."/>
            <person name="Lucas S."/>
            <person name="Lapidus A."/>
            <person name="Barry K."/>
            <person name="Detter J.C."/>
            <person name="Glavina del Rio T."/>
            <person name="Hammon N."/>
            <person name="Israni S."/>
            <person name="Dalin E."/>
            <person name="Tice H."/>
            <person name="Pitluck S."/>
            <person name="Munk A.C."/>
            <person name="Brettin T."/>
            <person name="Bruce D."/>
            <person name="Han C."/>
            <person name="Tapia R."/>
            <person name="Gilna P."/>
            <person name="Schmutz J."/>
            <person name="Larimer F."/>
            <person name="Land M."/>
            <person name="Hauser L."/>
            <person name="Kyrpides N."/>
            <person name="Lykidis A."/>
            <person name="da Costa M.S."/>
            <person name="Rainey F.A."/>
            <person name="Empadinhas N."/>
            <person name="Jolivet E."/>
            <person name="Battista J.R."/>
            <person name="Richardson P."/>
        </authorList>
    </citation>
    <scope>NUCLEOTIDE SEQUENCE [LARGE SCALE GENOMIC DNA]</scope>
    <source>
        <strain>DSM 9941 / JCM 11954 / NBRC 16129 / PRD-1</strain>
    </source>
</reference>